<gene>
    <name type="ORF">F28H7.8</name>
</gene>
<organism>
    <name type="scientific">Caenorhabditis elegans</name>
    <dbReference type="NCBI Taxonomy" id="6239"/>
    <lineage>
        <taxon>Eukaryota</taxon>
        <taxon>Metazoa</taxon>
        <taxon>Ecdysozoa</taxon>
        <taxon>Nematoda</taxon>
        <taxon>Chromadorea</taxon>
        <taxon>Rhabditida</taxon>
        <taxon>Rhabditina</taxon>
        <taxon>Rhabditomorpha</taxon>
        <taxon>Rhabditoidea</taxon>
        <taxon>Rhabditidae</taxon>
        <taxon>Peloderinae</taxon>
        <taxon>Caenorhabditis</taxon>
    </lineage>
</organism>
<proteinExistence type="predicted"/>
<protein>
    <recommendedName>
        <fullName>CRAL-TRIO domain-containing protein F28H7.8</fullName>
    </recommendedName>
</protein>
<reference key="1">
    <citation type="journal article" date="1998" name="Science">
        <title>Genome sequence of the nematode C. elegans: a platform for investigating biology.</title>
        <authorList>
            <consortium name="The C. elegans sequencing consortium"/>
        </authorList>
    </citation>
    <scope>NUCLEOTIDE SEQUENCE [LARGE SCALE GENOMIC DNA]</scope>
    <source>
        <strain>Bristol N2</strain>
    </source>
</reference>
<feature type="chain" id="PRO_0000210752" description="CRAL-TRIO domain-containing protein F28H7.8">
    <location>
        <begin position="1"/>
        <end position="410"/>
    </location>
</feature>
<feature type="domain" description="CRAL-TRIO" evidence="1">
    <location>
        <begin position="81"/>
        <end position="257"/>
    </location>
</feature>
<evidence type="ECO:0000255" key="1">
    <source>
        <dbReference type="PROSITE-ProRule" id="PRU00056"/>
    </source>
</evidence>
<dbReference type="EMBL" id="Z72508">
    <property type="protein sequence ID" value="CAA96639.2"/>
    <property type="molecule type" value="Genomic_DNA"/>
</dbReference>
<dbReference type="PIR" id="T21528">
    <property type="entry name" value="T21528"/>
</dbReference>
<dbReference type="RefSeq" id="NP_505746.2">
    <property type="nucleotide sequence ID" value="NM_073345.3"/>
</dbReference>
<dbReference type="SMR" id="Q19895"/>
<dbReference type="BioGRID" id="49878">
    <property type="interactions" value="1"/>
</dbReference>
<dbReference type="DIP" id="DIP-25073N"/>
<dbReference type="FunCoup" id="Q19895">
    <property type="interactions" value="7"/>
</dbReference>
<dbReference type="STRING" id="6239.F28H7.8.1"/>
<dbReference type="PaxDb" id="6239-F28H7.8"/>
<dbReference type="PeptideAtlas" id="Q19895"/>
<dbReference type="EnsemblMetazoa" id="F28H7.8.1">
    <property type="protein sequence ID" value="F28H7.8.1"/>
    <property type="gene ID" value="WBGene00009241"/>
</dbReference>
<dbReference type="GeneID" id="185099"/>
<dbReference type="KEGG" id="cel:CELE_F28H7.8"/>
<dbReference type="UCSC" id="F28H7.8">
    <property type="organism name" value="c. elegans"/>
</dbReference>
<dbReference type="AGR" id="WB:WBGene00009241"/>
<dbReference type="CTD" id="185099"/>
<dbReference type="WormBase" id="F28H7.8">
    <property type="protein sequence ID" value="CE37900"/>
    <property type="gene ID" value="WBGene00009241"/>
</dbReference>
<dbReference type="eggNOG" id="KOG1471">
    <property type="taxonomic scope" value="Eukaryota"/>
</dbReference>
<dbReference type="GeneTree" id="ENSGT00940000170522"/>
<dbReference type="HOGENOM" id="CLU_061446_0_0_1"/>
<dbReference type="InParanoid" id="Q19895"/>
<dbReference type="OMA" id="VGQHYRE"/>
<dbReference type="OrthoDB" id="1434354at2759"/>
<dbReference type="PhylomeDB" id="Q19895"/>
<dbReference type="PRO" id="PR:Q19895"/>
<dbReference type="Proteomes" id="UP000001940">
    <property type="component" value="Chromosome V"/>
</dbReference>
<dbReference type="Bgee" id="WBGene00009241">
    <property type="expression patterns" value="Expressed in larva and 2 other cell types or tissues"/>
</dbReference>
<dbReference type="CDD" id="cd00170">
    <property type="entry name" value="SEC14"/>
    <property type="match status" value="1"/>
</dbReference>
<dbReference type="Gene3D" id="3.40.525.10">
    <property type="entry name" value="CRAL-TRIO lipid binding domain"/>
    <property type="match status" value="1"/>
</dbReference>
<dbReference type="Gene3D" id="2.60.120.680">
    <property type="entry name" value="GOLD domain"/>
    <property type="match status" value="1"/>
</dbReference>
<dbReference type="InterPro" id="IPR001251">
    <property type="entry name" value="CRAL-TRIO_dom"/>
</dbReference>
<dbReference type="InterPro" id="IPR036865">
    <property type="entry name" value="CRAL-TRIO_dom_sf"/>
</dbReference>
<dbReference type="InterPro" id="IPR053302">
    <property type="entry name" value="CRAL-TRIO_domain"/>
</dbReference>
<dbReference type="InterPro" id="IPR036273">
    <property type="entry name" value="CRAL/TRIO_N_dom_sf"/>
</dbReference>
<dbReference type="PANTHER" id="PTHR47159:SF1">
    <property type="entry name" value="CRAL-TRIO DOMAIN-CONTAINING PROTEIN F28H7.8"/>
    <property type="match status" value="1"/>
</dbReference>
<dbReference type="PANTHER" id="PTHR47159">
    <property type="entry name" value="PROTEIN CBG07705-RELATED"/>
    <property type="match status" value="1"/>
</dbReference>
<dbReference type="Pfam" id="PF00650">
    <property type="entry name" value="CRAL_TRIO"/>
    <property type="match status" value="1"/>
</dbReference>
<dbReference type="SMART" id="SM00516">
    <property type="entry name" value="SEC14"/>
    <property type="match status" value="1"/>
</dbReference>
<dbReference type="SUPFAM" id="SSF52087">
    <property type="entry name" value="CRAL/TRIO domain"/>
    <property type="match status" value="1"/>
</dbReference>
<dbReference type="SUPFAM" id="SSF46938">
    <property type="entry name" value="CRAL/TRIO N-terminal domain"/>
    <property type="match status" value="1"/>
</dbReference>
<dbReference type="PROSITE" id="PS50191">
    <property type="entry name" value="CRAL_TRIO"/>
    <property type="match status" value="1"/>
</dbReference>
<sequence>MAPNALSPVDIENMNDAAIEQVRLQVSDVIDPRYDTKWNMLRWLQSNDFNIPKTVHLLKKHLKWRKDRKLDEPESQSLLQFSDARRKHAPIDIIGPQRKEDGDRLVVVDRAGRIDVSGLMKSVQPTEYLHEMFRSFEEIQRRLMKMEAETGVQCYMHYIFDLEALNFDPTLLGVVNGPFRVSWQLVGQHYREFIDKFIVINSPSYINVLWSALSPFIPEQSKQRIVFAGSNWKEELLDIVDKECLPERYGGMIPDIQCLKPVDPIPKSLYWKLPAQYPTMDQLHKVSVSASKHRMLIYKVDKPDTELLMYSHNENDITITLYYSKNKNVSENDLELAVAPIPKCGLPAMDLFDYNCEYPGYYYIKLANEASWLLPSTYRIIVIEKESGKELEPLNLNEKWIKKGQKSKKK</sequence>
<keyword id="KW-1185">Reference proteome</keyword>
<name>YUQP_CAEEL</name>
<accession>Q19895</accession>